<comment type="function">
    <text evidence="1">One of the primary rRNA binding proteins, this protein initially binds near the 5'-end of the 23S rRNA. It is important during the early stages of 50S assembly. It makes multiple contacts with different domains of the 23S rRNA in the assembled 50S subunit and ribosome.</text>
</comment>
<comment type="function">
    <text evidence="1">Forms part of the polypeptide exit tunnel.</text>
</comment>
<comment type="subunit">
    <text evidence="1">Part of the 50S ribosomal subunit.</text>
</comment>
<comment type="similarity">
    <text evidence="1">Belongs to the universal ribosomal protein uL4 family.</text>
</comment>
<protein>
    <recommendedName>
        <fullName evidence="1">Large ribosomal subunit protein uL4</fullName>
    </recommendedName>
    <alternativeName>
        <fullName evidence="3">50S ribosomal protein L4</fullName>
    </alternativeName>
</protein>
<feature type="chain" id="PRO_1000142196" description="Large ribosomal subunit protein uL4">
    <location>
        <begin position="1"/>
        <end position="221"/>
    </location>
</feature>
<feature type="region of interest" description="Disordered" evidence="2">
    <location>
        <begin position="48"/>
        <end position="77"/>
    </location>
</feature>
<keyword id="KW-1185">Reference proteome</keyword>
<keyword id="KW-0687">Ribonucleoprotein</keyword>
<keyword id="KW-0689">Ribosomal protein</keyword>
<keyword id="KW-0694">RNA-binding</keyword>
<keyword id="KW-0699">rRNA-binding</keyword>
<organism>
    <name type="scientific">Thermosipho africanus (strain TCF52B)</name>
    <dbReference type="NCBI Taxonomy" id="484019"/>
    <lineage>
        <taxon>Bacteria</taxon>
        <taxon>Thermotogati</taxon>
        <taxon>Thermotogota</taxon>
        <taxon>Thermotogae</taxon>
        <taxon>Thermotogales</taxon>
        <taxon>Fervidobacteriaceae</taxon>
        <taxon>Thermosipho</taxon>
    </lineage>
</organism>
<sequence>MAKVSLFNSKGENIGPIDLKDEVFAIEPNFDVIWRYVDMQLTNARAGTASTKTRGEVSGGGRKPWIQKHTGRARQGSIRAPHWRHGGVAHGPKPRVYFKRLNKKMKRLALKSALSLRLKEGNLIVVDEIKFKRPKTKDLREVLKNLGLENQKVLVVLPKKVEEYVNVKISGRNIPGVKVIIADNPGVDRTNIDGLNVYDILNHDKLVLLQGTVQKIEEVLG</sequence>
<accession>B7IHU7</accession>
<dbReference type="EMBL" id="CP001185">
    <property type="protein sequence ID" value="ACJ75661.1"/>
    <property type="molecule type" value="Genomic_DNA"/>
</dbReference>
<dbReference type="RefSeq" id="WP_004101441.1">
    <property type="nucleotide sequence ID" value="NC_011653.1"/>
</dbReference>
<dbReference type="SMR" id="B7IHU7"/>
<dbReference type="STRING" id="484019.THA_1216"/>
<dbReference type="KEGG" id="taf:THA_1216"/>
<dbReference type="eggNOG" id="COG0088">
    <property type="taxonomic scope" value="Bacteria"/>
</dbReference>
<dbReference type="HOGENOM" id="CLU_041575_5_2_0"/>
<dbReference type="OrthoDB" id="9803201at2"/>
<dbReference type="Proteomes" id="UP000002453">
    <property type="component" value="Chromosome"/>
</dbReference>
<dbReference type="GO" id="GO:1990904">
    <property type="term" value="C:ribonucleoprotein complex"/>
    <property type="evidence" value="ECO:0007669"/>
    <property type="project" value="UniProtKB-KW"/>
</dbReference>
<dbReference type="GO" id="GO:0005840">
    <property type="term" value="C:ribosome"/>
    <property type="evidence" value="ECO:0007669"/>
    <property type="project" value="UniProtKB-KW"/>
</dbReference>
<dbReference type="GO" id="GO:0019843">
    <property type="term" value="F:rRNA binding"/>
    <property type="evidence" value="ECO:0007669"/>
    <property type="project" value="UniProtKB-UniRule"/>
</dbReference>
<dbReference type="GO" id="GO:0003735">
    <property type="term" value="F:structural constituent of ribosome"/>
    <property type="evidence" value="ECO:0007669"/>
    <property type="project" value="InterPro"/>
</dbReference>
<dbReference type="GO" id="GO:0006412">
    <property type="term" value="P:translation"/>
    <property type="evidence" value="ECO:0007669"/>
    <property type="project" value="UniProtKB-UniRule"/>
</dbReference>
<dbReference type="Gene3D" id="3.40.1370.10">
    <property type="match status" value="1"/>
</dbReference>
<dbReference type="HAMAP" id="MF_01328_B">
    <property type="entry name" value="Ribosomal_uL4_B"/>
    <property type="match status" value="1"/>
</dbReference>
<dbReference type="InterPro" id="IPR002136">
    <property type="entry name" value="Ribosomal_uL4"/>
</dbReference>
<dbReference type="InterPro" id="IPR013005">
    <property type="entry name" value="Ribosomal_uL4-like"/>
</dbReference>
<dbReference type="InterPro" id="IPR023574">
    <property type="entry name" value="Ribosomal_uL4_dom_sf"/>
</dbReference>
<dbReference type="NCBIfam" id="TIGR03953">
    <property type="entry name" value="rplD_bact"/>
    <property type="match status" value="1"/>
</dbReference>
<dbReference type="PANTHER" id="PTHR10746">
    <property type="entry name" value="50S RIBOSOMAL PROTEIN L4"/>
    <property type="match status" value="1"/>
</dbReference>
<dbReference type="PANTHER" id="PTHR10746:SF6">
    <property type="entry name" value="LARGE RIBOSOMAL SUBUNIT PROTEIN UL4M"/>
    <property type="match status" value="1"/>
</dbReference>
<dbReference type="Pfam" id="PF00573">
    <property type="entry name" value="Ribosomal_L4"/>
    <property type="match status" value="1"/>
</dbReference>
<dbReference type="SUPFAM" id="SSF52166">
    <property type="entry name" value="Ribosomal protein L4"/>
    <property type="match status" value="1"/>
</dbReference>
<reference key="1">
    <citation type="journal article" date="2009" name="J. Bacteriol.">
        <title>The genome of Thermosipho africanus TCF52B: lateral genetic connections to the Firmicutes and Archaea.</title>
        <authorList>
            <person name="Nesboe C.L."/>
            <person name="Bapteste E."/>
            <person name="Curtis B."/>
            <person name="Dahle H."/>
            <person name="Lopez P."/>
            <person name="Macleod D."/>
            <person name="Dlutek M."/>
            <person name="Bowman S."/>
            <person name="Zhaxybayeva O."/>
            <person name="Birkeland N.-K."/>
            <person name="Doolittle W.F."/>
        </authorList>
    </citation>
    <scope>NUCLEOTIDE SEQUENCE [LARGE SCALE GENOMIC DNA]</scope>
    <source>
        <strain>TCF52B</strain>
    </source>
</reference>
<name>RL4_THEAB</name>
<proteinExistence type="inferred from homology"/>
<evidence type="ECO:0000255" key="1">
    <source>
        <dbReference type="HAMAP-Rule" id="MF_01328"/>
    </source>
</evidence>
<evidence type="ECO:0000256" key="2">
    <source>
        <dbReference type="SAM" id="MobiDB-lite"/>
    </source>
</evidence>
<evidence type="ECO:0000305" key="3"/>
<gene>
    <name evidence="1" type="primary">rplD</name>
    <name type="ordered locus">THA_1216</name>
</gene>